<accession>P0DX32</accession>
<proteinExistence type="evidence at protein level"/>
<comment type="function">
    <text evidence="1 2 3">Linear cationic alpha-helical peptide that acts as antimicrobial peptide (PubMed:30857348). Has antibacterial activities against both Gram-positive and Gram-negative strains (PubMed:30857348). Has no activity against the yeast C.albicans (PubMed:30857348). Shows moderate mast cell degranulation, as well as leishmanicidal activities (IC(50)=36 uM) (PubMed:30857348). Has no hemolytic activity (PubMed:30857348). Its mast cell degranulation activity may be related to the activation of G-protein coupled receptors in mast cells as well as interaction with other proteins located in cell endosomal membranes in the mast cells (By similarity).</text>
</comment>
<comment type="subcellular location">
    <subcellularLocation>
        <location evidence="3">Secreted</location>
    </subcellularLocation>
    <subcellularLocation>
        <location evidence="5">Target cell membrane</location>
    </subcellularLocation>
    <text evidence="6">Has an amphipathic alpha-helical conformation.</text>
</comment>
<comment type="tissue specificity">
    <text evidence="6">Expressed by the venom gland.</text>
</comment>
<comment type="mass spectrometry"/>
<comment type="similarity">
    <text evidence="5">Belongs to the MCD family. Mastoparan subfamily.</text>
</comment>
<dbReference type="GO" id="GO:0005576">
    <property type="term" value="C:extracellular region"/>
    <property type="evidence" value="ECO:0007669"/>
    <property type="project" value="UniProtKB-SubCell"/>
</dbReference>
<dbReference type="GO" id="GO:0016020">
    <property type="term" value="C:membrane"/>
    <property type="evidence" value="ECO:0007669"/>
    <property type="project" value="UniProtKB-KW"/>
</dbReference>
<dbReference type="GO" id="GO:0044218">
    <property type="term" value="C:other organism cell membrane"/>
    <property type="evidence" value="ECO:0007669"/>
    <property type="project" value="UniProtKB-KW"/>
</dbReference>
<dbReference type="GO" id="GO:0090729">
    <property type="term" value="F:toxin activity"/>
    <property type="evidence" value="ECO:0007669"/>
    <property type="project" value="UniProtKB-KW"/>
</dbReference>
<dbReference type="GO" id="GO:0042742">
    <property type="term" value="P:defense response to bacterium"/>
    <property type="evidence" value="ECO:0007669"/>
    <property type="project" value="UniProtKB-KW"/>
</dbReference>
<dbReference type="GO" id="GO:0045087">
    <property type="term" value="P:innate immune response"/>
    <property type="evidence" value="ECO:0007669"/>
    <property type="project" value="UniProtKB-KW"/>
</dbReference>
<evidence type="ECO:0000250" key="1">
    <source>
        <dbReference type="UniProtKB" id="P01514"/>
    </source>
</evidence>
<evidence type="ECO:0000250" key="2">
    <source>
        <dbReference type="UniProtKB" id="P84914"/>
    </source>
</evidence>
<evidence type="ECO:0000269" key="3">
    <source>
    </source>
</evidence>
<evidence type="ECO:0000303" key="4">
    <source>
    </source>
</evidence>
<evidence type="ECO:0000305" key="5"/>
<evidence type="ECO:0000305" key="6">
    <source>
    </source>
</evidence>
<reference key="1">
    <citation type="journal article" date="2019" name="Toxins">
        <title>New mastoparan peptides in the venom of the solitary Eumenine wasp Eumenes micado.</title>
        <authorList>
            <person name="Konno K."/>
            <person name="Kazuma K."/>
            <person name="Rangel M."/>
            <person name="Stolarz-de-Oliveira J."/>
            <person name="Fontana R."/>
            <person name="Kawano M."/>
            <person name="Fuchino H."/>
            <person name="Hide I."/>
            <person name="Yasuhara T."/>
            <person name="Nakata Y."/>
        </authorList>
    </citation>
    <scope>PROTEIN SEQUENCE</scope>
    <scope>FUNCTION</scope>
    <scope>AMIDATION AT ILE-14</scope>
    <scope>MASS SPECTROMETRY</scope>
    <scope>SUBCELLULAR LOCATION</scope>
    <source>
        <tissue>Venom</tissue>
    </source>
</reference>
<name>MAST2_EUMMI</name>
<feature type="peptide" id="PRO_0000458777" description="Eumenine mastoparan-EM2" evidence="3">
    <location>
        <begin position="1"/>
        <end position="14"/>
    </location>
</feature>
<feature type="modified residue" description="Isoleucine amide" evidence="3">
    <location>
        <position position="14"/>
    </location>
</feature>
<sequence>LKLLGIVKKVLGAI</sequence>
<keyword id="KW-0027">Amidation</keyword>
<keyword id="KW-0044">Antibiotic</keyword>
<keyword id="KW-0929">Antimicrobial</keyword>
<keyword id="KW-0903">Direct protein sequencing</keyword>
<keyword id="KW-1213">G-protein coupled receptor impairing toxin</keyword>
<keyword id="KW-0391">Immunity</keyword>
<keyword id="KW-0399">Innate immunity</keyword>
<keyword id="KW-0467">Mast cell degranulation</keyword>
<keyword id="KW-0472">Membrane</keyword>
<keyword id="KW-0964">Secreted</keyword>
<keyword id="KW-1052">Target cell membrane</keyword>
<keyword id="KW-1053">Target membrane</keyword>
<keyword id="KW-0800">Toxin</keyword>
<protein>
    <recommendedName>
        <fullName evidence="4">Eumenine mastoparan-EM2</fullName>
        <shortName evidence="4">EMP-EM2</shortName>
    </recommendedName>
</protein>
<organism>
    <name type="scientific">Eumenes micado</name>
    <name type="common">Potter wasp</name>
    <dbReference type="NCBI Taxonomy" id="2597558"/>
    <lineage>
        <taxon>Eukaryota</taxon>
        <taxon>Metazoa</taxon>
        <taxon>Ecdysozoa</taxon>
        <taxon>Arthropoda</taxon>
        <taxon>Hexapoda</taxon>
        <taxon>Insecta</taxon>
        <taxon>Pterygota</taxon>
        <taxon>Neoptera</taxon>
        <taxon>Endopterygota</taxon>
        <taxon>Hymenoptera</taxon>
        <taxon>Apocrita</taxon>
        <taxon>Aculeata</taxon>
        <taxon>Vespoidea</taxon>
        <taxon>Vespidae</taxon>
        <taxon>Eumeninae</taxon>
        <taxon>Eumenes</taxon>
    </lineage>
</organism>